<feature type="chain" id="PRO_0000133206" description="Regulatory protein E2">
    <location>
        <begin position="1"/>
        <end position="388"/>
    </location>
</feature>
<feature type="region of interest" description="Transactivation domain" evidence="1">
    <location>
        <begin position="1"/>
        <end position="202"/>
    </location>
</feature>
<feature type="region of interest" description="Disordered" evidence="2">
    <location>
        <begin position="227"/>
        <end position="259"/>
    </location>
</feature>
<feature type="region of interest" description="DNA-binding domain" evidence="1">
    <location>
        <begin position="306"/>
        <end position="388"/>
    </location>
</feature>
<feature type="compositionally biased region" description="Polar residues" evidence="2">
    <location>
        <begin position="235"/>
        <end position="245"/>
    </location>
</feature>
<keyword id="KW-0010">Activator</keyword>
<keyword id="KW-0235">DNA replication</keyword>
<keyword id="KW-0238">DNA-binding</keyword>
<keyword id="KW-0244">Early protein</keyword>
<keyword id="KW-1048">Host nucleus</keyword>
<keyword id="KW-0597">Phosphoprotein</keyword>
<keyword id="KW-1185">Reference proteome</keyword>
<keyword id="KW-0678">Repressor</keyword>
<keyword id="KW-0804">Transcription</keyword>
<keyword id="KW-0805">Transcription regulation</keyword>
<organism>
    <name type="scientific">Human papillomavirus 27</name>
    <dbReference type="NCBI Taxonomy" id="333752"/>
    <lineage>
        <taxon>Viruses</taxon>
        <taxon>Monodnaviria</taxon>
        <taxon>Shotokuvirae</taxon>
        <taxon>Cossaviricota</taxon>
        <taxon>Papovaviricetes</taxon>
        <taxon>Zurhausenvirales</taxon>
        <taxon>Papillomaviridae</taxon>
        <taxon>Firstpapillomavirinae</taxon>
        <taxon>Alphapapillomavirus</taxon>
        <taxon>Alphapapillomavirus 4</taxon>
    </lineage>
</organism>
<organismHost>
    <name type="scientific">Homo sapiens</name>
    <name type="common">Human</name>
    <dbReference type="NCBI Taxonomy" id="9606"/>
</organismHost>
<name>VE2_HPV27</name>
<dbReference type="EMBL" id="X74473">
    <property type="protein sequence ID" value="CAA52539.1"/>
    <property type="molecule type" value="Genomic_DNA"/>
</dbReference>
<dbReference type="PIR" id="S36500">
    <property type="entry name" value="S36500"/>
</dbReference>
<dbReference type="SMR" id="P36789"/>
<dbReference type="Proteomes" id="UP000009114">
    <property type="component" value="Genome"/>
</dbReference>
<dbReference type="GO" id="GO:0042025">
    <property type="term" value="C:host cell nucleus"/>
    <property type="evidence" value="ECO:0007669"/>
    <property type="project" value="UniProtKB-SubCell"/>
</dbReference>
<dbReference type="GO" id="GO:0003677">
    <property type="term" value="F:DNA binding"/>
    <property type="evidence" value="ECO:0007669"/>
    <property type="project" value="UniProtKB-UniRule"/>
</dbReference>
<dbReference type="GO" id="GO:0003700">
    <property type="term" value="F:DNA-binding transcription factor activity"/>
    <property type="evidence" value="ECO:0007669"/>
    <property type="project" value="UniProtKB-UniRule"/>
</dbReference>
<dbReference type="GO" id="GO:0000166">
    <property type="term" value="F:nucleotide binding"/>
    <property type="evidence" value="ECO:0007669"/>
    <property type="project" value="UniProtKB-UniRule"/>
</dbReference>
<dbReference type="GO" id="GO:0006260">
    <property type="term" value="P:DNA replication"/>
    <property type="evidence" value="ECO:0007669"/>
    <property type="project" value="UniProtKB-KW"/>
</dbReference>
<dbReference type="GO" id="GO:0006351">
    <property type="term" value="P:DNA-templated transcription"/>
    <property type="evidence" value="ECO:0007669"/>
    <property type="project" value="UniProtKB-UniRule"/>
</dbReference>
<dbReference type="GO" id="GO:0006275">
    <property type="term" value="P:regulation of DNA replication"/>
    <property type="evidence" value="ECO:0007669"/>
    <property type="project" value="UniProtKB-UniRule"/>
</dbReference>
<dbReference type="GO" id="GO:0039693">
    <property type="term" value="P:viral DNA genome replication"/>
    <property type="evidence" value="ECO:0007669"/>
    <property type="project" value="UniProtKB-UniRule"/>
</dbReference>
<dbReference type="Gene3D" id="3.30.70.330">
    <property type="match status" value="1"/>
</dbReference>
<dbReference type="Gene3D" id="1.10.287.30">
    <property type="entry name" value="E2 (early) protein, N terminal domain, subdomain 1"/>
    <property type="match status" value="1"/>
</dbReference>
<dbReference type="Gene3D" id="2.170.200.10">
    <property type="entry name" value="Papillomavirus E2 early protein domain"/>
    <property type="match status" value="1"/>
</dbReference>
<dbReference type="HAMAP" id="MF_04001">
    <property type="entry name" value="PPV_E2"/>
    <property type="match status" value="1"/>
</dbReference>
<dbReference type="InterPro" id="IPR035975">
    <property type="entry name" value="E2/EBNA1_C_sf"/>
</dbReference>
<dbReference type="InterPro" id="IPR012677">
    <property type="entry name" value="Nucleotide-bd_a/b_plait_sf"/>
</dbReference>
<dbReference type="InterPro" id="IPR000427">
    <property type="entry name" value="Papillomavirus_E2_C"/>
</dbReference>
<dbReference type="InterPro" id="IPR001866">
    <property type="entry name" value="PPV_E2_N"/>
</dbReference>
<dbReference type="InterPro" id="IPR033668">
    <property type="entry name" value="Reg_prot_E2"/>
</dbReference>
<dbReference type="InterPro" id="IPR036050">
    <property type="entry name" value="Regulatory_protein_E2_N"/>
</dbReference>
<dbReference type="InterPro" id="IPR042503">
    <property type="entry name" value="Regulatory_protein_E2_N_1"/>
</dbReference>
<dbReference type="InterPro" id="IPR042504">
    <property type="entry name" value="Regulatory_protein_E2_N_2"/>
</dbReference>
<dbReference type="Pfam" id="PF00511">
    <property type="entry name" value="PPV_E2_C"/>
    <property type="match status" value="1"/>
</dbReference>
<dbReference type="Pfam" id="PF00508">
    <property type="entry name" value="PPV_E2_N"/>
    <property type="match status" value="1"/>
</dbReference>
<dbReference type="SUPFAM" id="SSF51332">
    <property type="entry name" value="E2 regulatory, transactivation domain"/>
    <property type="match status" value="1"/>
</dbReference>
<dbReference type="SUPFAM" id="SSF54957">
    <property type="entry name" value="Viral DNA-binding domain"/>
    <property type="match status" value="1"/>
</dbReference>
<evidence type="ECO:0000255" key="1">
    <source>
        <dbReference type="HAMAP-Rule" id="MF_04001"/>
    </source>
</evidence>
<evidence type="ECO:0000256" key="2">
    <source>
        <dbReference type="SAM" id="MobiDB-lite"/>
    </source>
</evidence>
<gene>
    <name evidence="1" type="primary">E2</name>
</gene>
<reference key="1">
    <citation type="journal article" date="1994" name="Curr. Top. Microbiol. Immunol.">
        <title>Primer-directed sequencing of human papillomavirus types.</title>
        <authorList>
            <person name="Delius H."/>
            <person name="Hofmann B."/>
        </authorList>
    </citation>
    <scope>NUCLEOTIDE SEQUENCE [GENOMIC DNA]</scope>
</reference>
<accession>P36789</accession>
<proteinExistence type="inferred from homology"/>
<sequence>METLANRLDACQETLLELYEKDSNKLEDQIKHWAQVRLENVMLFKARECGMTRVGCTTVPALTVSKAKACQAIEVQLALQTLMQSAYSTEAWTLRDTCLEMWDAPPKKCWKKKGLSVLVKFDGSSDRDMIYTGWHHIYVQDANDDTWHKVPGKVDELGLYYEHDGVRVNYVDFGTESLTYGVTGTWEVHVAGRVIHHTSASVSSTQATASDDEPLSPIRLAVSPVPAPASAASARTGTAPPTNLLCTAPAPPSPPAKRQRVIVGQQHLRPDSTRTVGEGQVECYDKRSISNTNSTAPRWDHGDTDTVPVIHLRGDANCLKCFRYRVQKHKDKLYDRVSSTWHWAGGKCDKTAFVTVWYTSVEQRKEFLTRVNIPKGVIALPGYMSAFV</sequence>
<comment type="function">
    <text evidence="1">Plays a role in the initiation of viral DNA replication. A dimer of E2 interacts with a dimer of E1 in order to improve specificity of E1 DNA binding activity. Once the complex recognizes and binds DNA at specific sites, the E2 dimer is removed from DNA. E2 also regulates viral transcription through binding to the E2RE response element (5'-ACCNNNNNNGGT-3') present in multiple copies in the regulatory regions of the viral genome. Activates or represses transcription depending on E2RE's position with regards to proximal promoter elements including the TATA-box. Repression occurs by sterically hindering the assembly of the transcription initiation complex.</text>
</comment>
<comment type="subunit">
    <text evidence="1">Binds DNA as homodimer. Interacts with protein E1; this interaction greatly increases E1 DNA-binding activity. Interacts with protein L1; this interaction enhances E2-dependent replication and transcription activation. Interacts with protein L2; this interaction inhibits E2 transcriptional activity but not DNA replication function E2. Interacts with protein E7; this interaction inhibits E7 oncogenic activity. Interacts with host TAF1; this interaction modulates E2-dependent transcriptional regulation. Interacts with host BRD4; this interaction mediates E2 transcriptional activation function. Additionally, the interaction with host BRD4 on mitotic chromosomes mediates tethering of the viral genome. Interacts with host TOPBP1; this interaction is required for optimal viral DNA replication.</text>
</comment>
<comment type="subcellular location">
    <subcellularLocation>
        <location evidence="1">Host nucleus</location>
    </subcellularLocation>
</comment>
<comment type="PTM">
    <text evidence="1">Phosphorylated.</text>
</comment>
<comment type="similarity">
    <text evidence="1">Belongs to the papillomaviridae E2 protein family.</text>
</comment>
<protein>
    <recommendedName>
        <fullName evidence="1">Regulatory protein E2</fullName>
    </recommendedName>
</protein>